<organism>
    <name type="scientific">Halobacterium salinarum (strain ATCC 29341 / DSM 671 / R1)</name>
    <dbReference type="NCBI Taxonomy" id="478009"/>
    <lineage>
        <taxon>Archaea</taxon>
        <taxon>Methanobacteriati</taxon>
        <taxon>Methanobacteriota</taxon>
        <taxon>Stenosarchaea group</taxon>
        <taxon>Halobacteria</taxon>
        <taxon>Halobacteriales</taxon>
        <taxon>Halobacteriaceae</taxon>
        <taxon>Halobacterium</taxon>
        <taxon>Halobacterium salinarum NRC-34001</taxon>
    </lineage>
</organism>
<reference key="1">
    <citation type="journal article" date="2008" name="Genomics">
        <title>Evolution in the laboratory: the genome of Halobacterium salinarum strain R1 compared to that of strain NRC-1.</title>
        <authorList>
            <person name="Pfeiffer F."/>
            <person name="Schuster S.C."/>
            <person name="Broicher A."/>
            <person name="Falb M."/>
            <person name="Palm P."/>
            <person name="Rodewald K."/>
            <person name="Ruepp A."/>
            <person name="Soppa J."/>
            <person name="Tittor J."/>
            <person name="Oesterhelt D."/>
        </authorList>
    </citation>
    <scope>NUCLEOTIDE SEQUENCE [LARGE SCALE GENOMIC DNA]</scope>
    <source>
        <strain>ATCC 29341 / DSM 671 / R1</strain>
    </source>
</reference>
<sequence length="257" mass="27994">MPVSETTDRQASNGGDGPALPINELFYSLQGEGKLAGTPSVFVRTSGCNLRCWFCDSYHTSWEPTHATMSVDDIIAEVQSYEHADHVVLTGGEPLLHDDAVVLLDRLAALGYHTTVETNGTIHRDAPIDLASVSPKLASSTPTAETDPKGDGEWAARHDARRIDVATLGALADDYDTQLKFVVTDPSDMPEIESLLAEIRTATDTRIGDEDVVLMPEGTTHAELDARRNEVATLAMEHGYRYTPRLHVALWNDAPET</sequence>
<geneLocation type="plasmid">
    <name>PHS3</name>
</geneLocation>
<proteinExistence type="inferred from homology"/>
<feature type="chain" id="PRO_0000408954" description="7-carboxy-7-deazaguanine synthase">
    <location>
        <begin position="1"/>
        <end position="257"/>
    </location>
</feature>
<feature type="domain" description="Radical SAM core" evidence="2">
    <location>
        <begin position="35"/>
        <end position="253"/>
    </location>
</feature>
<feature type="region of interest" description="Disordered" evidence="3">
    <location>
        <begin position="133"/>
        <end position="153"/>
    </location>
</feature>
<feature type="binding site" evidence="1">
    <location>
        <begin position="29"/>
        <end position="31"/>
    </location>
    <ligand>
        <name>substrate</name>
    </ligand>
</feature>
<feature type="binding site" evidence="1">
    <location>
        <position position="44"/>
    </location>
    <ligand>
        <name>substrate</name>
    </ligand>
</feature>
<feature type="binding site" evidence="1">
    <location>
        <position position="48"/>
    </location>
    <ligand>
        <name>[4Fe-4S] cluster</name>
        <dbReference type="ChEBI" id="CHEBI:49883"/>
        <note>4Fe-4S-S-AdoMet</note>
    </ligand>
</feature>
<feature type="binding site" evidence="1">
    <location>
        <position position="52"/>
    </location>
    <ligand>
        <name>[4Fe-4S] cluster</name>
        <dbReference type="ChEBI" id="CHEBI:49883"/>
        <note>4Fe-4S-S-AdoMet</note>
    </ligand>
</feature>
<feature type="binding site" evidence="1">
    <location>
        <position position="55"/>
    </location>
    <ligand>
        <name>[4Fe-4S] cluster</name>
        <dbReference type="ChEBI" id="CHEBI:49883"/>
        <note>4Fe-4S-S-AdoMet</note>
    </ligand>
</feature>
<feature type="binding site" evidence="1">
    <location>
        <position position="57"/>
    </location>
    <ligand>
        <name>Mg(2+)</name>
        <dbReference type="ChEBI" id="CHEBI:18420"/>
    </ligand>
</feature>
<feature type="binding site" evidence="1">
    <location>
        <position position="90"/>
    </location>
    <ligand>
        <name>substrate</name>
    </ligand>
</feature>
<feature type="binding site" evidence="1">
    <location>
        <position position="92"/>
    </location>
    <ligand>
        <name>S-adenosyl-L-methionine</name>
        <dbReference type="ChEBI" id="CHEBI:59789"/>
    </ligand>
</feature>
<dbReference type="EC" id="4.3.99.3" evidence="1"/>
<dbReference type="EMBL" id="AM774418">
    <property type="protein sequence ID" value="CAP15547.1"/>
    <property type="molecule type" value="Genomic_DNA"/>
</dbReference>
<dbReference type="RefSeq" id="WP_010904152.1">
    <property type="nucleotide sequence ID" value="NC_010368.1"/>
</dbReference>
<dbReference type="SMR" id="B0R9W6"/>
<dbReference type="EnsemblBacteria" id="CAP15547">
    <property type="protein sequence ID" value="CAP15547"/>
    <property type="gene ID" value="OE_5197R"/>
</dbReference>
<dbReference type="KEGG" id="hsl:OE_5197R"/>
<dbReference type="HOGENOM" id="CLU_066739_2_1_2"/>
<dbReference type="PhylomeDB" id="B0R9W6"/>
<dbReference type="UniPathway" id="UPA00391"/>
<dbReference type="Proteomes" id="UP000001321">
    <property type="component" value="Plasmid PHS3"/>
</dbReference>
<dbReference type="GO" id="GO:0051539">
    <property type="term" value="F:4 iron, 4 sulfur cluster binding"/>
    <property type="evidence" value="ECO:0007669"/>
    <property type="project" value="UniProtKB-UniRule"/>
</dbReference>
<dbReference type="GO" id="GO:0016840">
    <property type="term" value="F:carbon-nitrogen lyase activity"/>
    <property type="evidence" value="ECO:0007669"/>
    <property type="project" value="UniProtKB-UniRule"/>
</dbReference>
<dbReference type="GO" id="GO:0000287">
    <property type="term" value="F:magnesium ion binding"/>
    <property type="evidence" value="ECO:0007669"/>
    <property type="project" value="UniProtKB-UniRule"/>
</dbReference>
<dbReference type="GO" id="GO:1904047">
    <property type="term" value="F:S-adenosyl-L-methionine binding"/>
    <property type="evidence" value="ECO:0007669"/>
    <property type="project" value="UniProtKB-UniRule"/>
</dbReference>
<dbReference type="CDD" id="cd01335">
    <property type="entry name" value="Radical_SAM"/>
    <property type="match status" value="1"/>
</dbReference>
<dbReference type="Gene3D" id="3.20.20.70">
    <property type="entry name" value="Aldolase class I"/>
    <property type="match status" value="1"/>
</dbReference>
<dbReference type="HAMAP" id="MF_00917">
    <property type="entry name" value="QueE"/>
    <property type="match status" value="1"/>
</dbReference>
<dbReference type="InterPro" id="IPR024924">
    <property type="entry name" value="7-CO-7-deazaguanine_synth-like"/>
</dbReference>
<dbReference type="InterPro" id="IPR013785">
    <property type="entry name" value="Aldolase_TIM"/>
</dbReference>
<dbReference type="InterPro" id="IPR007197">
    <property type="entry name" value="rSAM"/>
</dbReference>
<dbReference type="PANTHER" id="PTHR42836">
    <property type="entry name" value="7-CARBOXY-7-DEAZAGUANINE SYNTHASE"/>
    <property type="match status" value="1"/>
</dbReference>
<dbReference type="PANTHER" id="PTHR42836:SF1">
    <property type="entry name" value="7-CARBOXY-7-DEAZAGUANINE SYNTHASE"/>
    <property type="match status" value="1"/>
</dbReference>
<dbReference type="Pfam" id="PF13353">
    <property type="entry name" value="Fer4_12"/>
    <property type="match status" value="1"/>
</dbReference>
<dbReference type="Pfam" id="PF04055">
    <property type="entry name" value="Radical_SAM"/>
    <property type="match status" value="1"/>
</dbReference>
<dbReference type="PIRSF" id="PIRSF000370">
    <property type="entry name" value="QueE"/>
    <property type="match status" value="1"/>
</dbReference>
<dbReference type="SFLD" id="SFLDS00029">
    <property type="entry name" value="Radical_SAM"/>
    <property type="match status" value="1"/>
</dbReference>
<dbReference type="SUPFAM" id="SSF102114">
    <property type="entry name" value="Radical SAM enzymes"/>
    <property type="match status" value="1"/>
</dbReference>
<dbReference type="PROSITE" id="PS51918">
    <property type="entry name" value="RADICAL_SAM"/>
    <property type="match status" value="1"/>
</dbReference>
<keyword id="KW-0004">4Fe-4S</keyword>
<keyword id="KW-0408">Iron</keyword>
<keyword id="KW-0411">Iron-sulfur</keyword>
<keyword id="KW-0456">Lyase</keyword>
<keyword id="KW-0460">Magnesium</keyword>
<keyword id="KW-0479">Metal-binding</keyword>
<keyword id="KW-0614">Plasmid</keyword>
<keyword id="KW-0949">S-adenosyl-L-methionine</keyword>
<gene>
    <name evidence="1" type="primary">queE</name>
    <name type="ordered locus">OE_5197R</name>
</gene>
<name>QUEE_HALS3</name>
<protein>
    <recommendedName>
        <fullName evidence="1">7-carboxy-7-deazaguanine synthase</fullName>
        <shortName evidence="1">CDG synthase</shortName>
        <ecNumber evidence="1">4.3.99.3</ecNumber>
    </recommendedName>
    <alternativeName>
        <fullName evidence="1">Archaeosine biosynthesis protein QueE</fullName>
    </alternativeName>
</protein>
<accession>B0R9W6</accession>
<evidence type="ECO:0000255" key="1">
    <source>
        <dbReference type="HAMAP-Rule" id="MF_00917"/>
    </source>
</evidence>
<evidence type="ECO:0000255" key="2">
    <source>
        <dbReference type="PROSITE-ProRule" id="PRU01266"/>
    </source>
</evidence>
<evidence type="ECO:0000256" key="3">
    <source>
        <dbReference type="SAM" id="MobiDB-lite"/>
    </source>
</evidence>
<comment type="function">
    <text evidence="1">Catalyzes the complex heterocyclic radical-mediated conversion of 6-carboxy-5,6,7,8-tetrahydropterin (CPH4) to 7-carboxy-7-deazaguanine (CDG), a step common to the biosynthetic pathways of all 7-deazapurine-containing compounds.</text>
</comment>
<comment type="catalytic activity">
    <reaction evidence="1">
        <text>6-carboxy-5,6,7,8-tetrahydropterin + H(+) = 7-carboxy-7-deazaguanine + NH4(+)</text>
        <dbReference type="Rhea" id="RHEA:27974"/>
        <dbReference type="ChEBI" id="CHEBI:15378"/>
        <dbReference type="ChEBI" id="CHEBI:28938"/>
        <dbReference type="ChEBI" id="CHEBI:61032"/>
        <dbReference type="ChEBI" id="CHEBI:61036"/>
        <dbReference type="EC" id="4.3.99.3"/>
    </reaction>
</comment>
<comment type="cofactor">
    <cofactor evidence="1">
        <name>[4Fe-4S] cluster</name>
        <dbReference type="ChEBI" id="CHEBI:49883"/>
    </cofactor>
    <text evidence="1">Binds 1 [4Fe-4S] cluster. The cluster is coordinated with 3 cysteines and an exchangeable S-adenosyl-L-methionine.</text>
</comment>
<comment type="cofactor">
    <cofactor evidence="1">
        <name>S-adenosyl-L-methionine</name>
        <dbReference type="ChEBI" id="CHEBI:59789"/>
    </cofactor>
    <text evidence="1">Binds 1 S-adenosyl-L-methionine per subunit.</text>
</comment>
<comment type="cofactor">
    <cofactor evidence="1">
        <name>Mg(2+)</name>
        <dbReference type="ChEBI" id="CHEBI:18420"/>
    </cofactor>
</comment>
<comment type="pathway">
    <text evidence="1">Purine metabolism; 7-cyano-7-deazaguanine biosynthesis.</text>
</comment>
<comment type="subunit">
    <text evidence="1">Homodimer.</text>
</comment>
<comment type="similarity">
    <text evidence="1">Belongs to the radical SAM superfamily. 7-carboxy-7-deazaguanine synthase family.</text>
</comment>